<proteinExistence type="uncertain"/>
<name>YG1E_YEAST</name>
<protein>
    <recommendedName>
        <fullName>Putative uncharacterized protein YGR022C</fullName>
    </recommendedName>
</protein>
<gene>
    <name type="ordered locus">YGR022C</name>
</gene>
<organism>
    <name type="scientific">Saccharomyces cerevisiae (strain ATCC 204508 / S288c)</name>
    <name type="common">Baker's yeast</name>
    <dbReference type="NCBI Taxonomy" id="559292"/>
    <lineage>
        <taxon>Eukaryota</taxon>
        <taxon>Fungi</taxon>
        <taxon>Dikarya</taxon>
        <taxon>Ascomycota</taxon>
        <taxon>Saccharomycotina</taxon>
        <taxon>Saccharomycetes</taxon>
        <taxon>Saccharomycetales</taxon>
        <taxon>Saccharomycetaceae</taxon>
        <taxon>Saccharomyces</taxon>
    </lineage>
</organism>
<comment type="miscellaneous">
    <text evidence="1">Completely overlaps MTL1.</text>
</comment>
<comment type="caution">
    <text evidence="2">Product of a dubious gene prediction unlikely to encode a functional protein. Because of that it is not part of the S.cerevisiae S288c complete/reference proteome set.</text>
</comment>
<reference key="1">
    <citation type="journal article" date="1997" name="Yeast">
        <title>Sequence analysis of 203 kilobases from Saccharomyces cerevisiae chromosome VII.</title>
        <authorList>
            <person name="Rieger M."/>
            <person name="Brueckner M."/>
            <person name="Schaefer M."/>
            <person name="Mueller-Auer S."/>
        </authorList>
    </citation>
    <scope>NUCLEOTIDE SEQUENCE [GENOMIC DNA]</scope>
    <source>
        <strain>ATCC 204508 / S288c</strain>
    </source>
</reference>
<reference key="2">
    <citation type="journal article" date="1997" name="Nature">
        <title>The nucleotide sequence of Saccharomyces cerevisiae chromosome VII.</title>
        <authorList>
            <person name="Tettelin H."/>
            <person name="Agostoni-Carbone M.L."/>
            <person name="Albermann K."/>
            <person name="Albers M."/>
            <person name="Arroyo J."/>
            <person name="Backes U."/>
            <person name="Barreiros T."/>
            <person name="Bertani I."/>
            <person name="Bjourson A.J."/>
            <person name="Brueckner M."/>
            <person name="Bruschi C.V."/>
            <person name="Carignani G."/>
            <person name="Castagnoli L."/>
            <person name="Cerdan E."/>
            <person name="Clemente M.L."/>
            <person name="Coblenz A."/>
            <person name="Coglievina M."/>
            <person name="Coissac E."/>
            <person name="Defoor E."/>
            <person name="Del Bino S."/>
            <person name="Delius H."/>
            <person name="Delneri D."/>
            <person name="de Wergifosse P."/>
            <person name="Dujon B."/>
            <person name="Durand P."/>
            <person name="Entian K.-D."/>
            <person name="Eraso P."/>
            <person name="Escribano V."/>
            <person name="Fabiani L."/>
            <person name="Fartmann B."/>
            <person name="Feroli F."/>
            <person name="Feuermann M."/>
            <person name="Frontali L."/>
            <person name="Garcia-Gonzalez M."/>
            <person name="Garcia-Saez M.I."/>
            <person name="Goffeau A."/>
            <person name="Guerreiro P."/>
            <person name="Hani J."/>
            <person name="Hansen M."/>
            <person name="Hebling U."/>
            <person name="Hernandez K."/>
            <person name="Heumann K."/>
            <person name="Hilger F."/>
            <person name="Hofmann B."/>
            <person name="Indge K.J."/>
            <person name="James C.M."/>
            <person name="Klima R."/>
            <person name="Koetter P."/>
            <person name="Kramer B."/>
            <person name="Kramer W."/>
            <person name="Lauquin G."/>
            <person name="Leuther H."/>
            <person name="Louis E.J."/>
            <person name="Maillier E."/>
            <person name="Marconi A."/>
            <person name="Martegani E."/>
            <person name="Mazon M.J."/>
            <person name="Mazzoni C."/>
            <person name="McReynolds A.D.K."/>
            <person name="Melchioretto P."/>
            <person name="Mewes H.-W."/>
            <person name="Minenkova O."/>
            <person name="Mueller-Auer S."/>
            <person name="Nawrocki A."/>
            <person name="Netter P."/>
            <person name="Neu R."/>
            <person name="Nombela C."/>
            <person name="Oliver S.G."/>
            <person name="Panzeri L."/>
            <person name="Paoluzi S."/>
            <person name="Plevani P."/>
            <person name="Portetelle D."/>
            <person name="Portillo F."/>
            <person name="Potier S."/>
            <person name="Purnelle B."/>
            <person name="Rieger M."/>
            <person name="Riles L."/>
            <person name="Rinaldi T."/>
            <person name="Robben J."/>
            <person name="Rodrigues-Pousada C."/>
            <person name="Rodriguez-Belmonte E."/>
            <person name="Rodriguez-Torres A.M."/>
            <person name="Rose M."/>
            <person name="Ruzzi M."/>
            <person name="Saliola M."/>
            <person name="Sanchez-Perez M."/>
            <person name="Schaefer B."/>
            <person name="Schaefer M."/>
            <person name="Scharfe M."/>
            <person name="Schmidheini T."/>
            <person name="Schreer A."/>
            <person name="Skala J."/>
            <person name="Souciet J.-L."/>
            <person name="Steensma H.Y."/>
            <person name="Talla E."/>
            <person name="Thierry A."/>
            <person name="Vandenbol M."/>
            <person name="van der Aart Q.J.M."/>
            <person name="Van Dyck L."/>
            <person name="Vanoni M."/>
            <person name="Verhasselt P."/>
            <person name="Voet M."/>
            <person name="Volckaert G."/>
            <person name="Wambutt R."/>
            <person name="Watson M.D."/>
            <person name="Weber N."/>
            <person name="Wedler E."/>
            <person name="Wedler H."/>
            <person name="Wipfli P."/>
            <person name="Wolf K."/>
            <person name="Wright L.F."/>
            <person name="Zaccaria P."/>
            <person name="Zimmermann M."/>
            <person name="Zollner A."/>
            <person name="Kleine K."/>
        </authorList>
    </citation>
    <scope>NUCLEOTIDE SEQUENCE [LARGE SCALE GENOMIC DNA]</scope>
    <source>
        <strain>ATCC 204508 / S288c</strain>
    </source>
</reference>
<reference key="3">
    <citation type="journal article" date="2014" name="G3 (Bethesda)">
        <title>The reference genome sequence of Saccharomyces cerevisiae: Then and now.</title>
        <authorList>
            <person name="Engel S.R."/>
            <person name="Dietrich F.S."/>
            <person name="Fisk D.G."/>
            <person name="Binkley G."/>
            <person name="Balakrishnan R."/>
            <person name="Costanzo M.C."/>
            <person name="Dwight S.S."/>
            <person name="Hitz B.C."/>
            <person name="Karra K."/>
            <person name="Nash R.S."/>
            <person name="Weng S."/>
            <person name="Wong E.D."/>
            <person name="Lloyd P."/>
            <person name="Skrzypek M.S."/>
            <person name="Miyasato S.R."/>
            <person name="Simison M."/>
            <person name="Cherry J.M."/>
        </authorList>
    </citation>
    <scope>GENOME REANNOTATION</scope>
    <source>
        <strain>ATCC 204508 / S288c</strain>
    </source>
</reference>
<reference key="4">
    <citation type="journal article" date="2007" name="Genome Res.">
        <title>Approaching a complete repository of sequence-verified protein-encoding clones for Saccharomyces cerevisiae.</title>
        <authorList>
            <person name="Hu Y."/>
            <person name="Rolfs A."/>
            <person name="Bhullar B."/>
            <person name="Murthy T.V.S."/>
            <person name="Zhu C."/>
            <person name="Berger M.F."/>
            <person name="Camargo A.A."/>
            <person name="Kelley F."/>
            <person name="McCarron S."/>
            <person name="Jepson D."/>
            <person name="Richardson A."/>
            <person name="Raphael J."/>
            <person name="Moreira D."/>
            <person name="Taycher E."/>
            <person name="Zuo D."/>
            <person name="Mohr S."/>
            <person name="Kane M.F."/>
            <person name="Williamson J."/>
            <person name="Simpson A.J.G."/>
            <person name="Bulyk M.L."/>
            <person name="Harlow E."/>
            <person name="Marsischky G."/>
            <person name="Kolodner R.D."/>
            <person name="LaBaer J."/>
        </authorList>
    </citation>
    <scope>NUCLEOTIDE SEQUENCE [GENOMIC DNA]</scope>
    <source>
        <strain>ATCC 204508 / S288c</strain>
    </source>
</reference>
<accession>P53213</accession>
<sequence length="109" mass="11720">MDEEESSEDNVDERVSSEELCGKEVKDTEAILGVDKLALLVASVLDVNDSTAESEVMEGAVLDVVLLAGTNSCERTLSGSVVNAMRIVLHIDRLEAELFFLVGLQLAIP</sequence>
<feature type="chain" id="PRO_0000202786" description="Putative uncharacterized protein YGR022C">
    <location>
        <begin position="1"/>
        <end position="109"/>
    </location>
</feature>
<evidence type="ECO:0000305" key="1"/>
<evidence type="ECO:0000305" key="2">
    <source>
    </source>
</evidence>
<dbReference type="EMBL" id="Z72807">
    <property type="protein sequence ID" value="CAA97005.1"/>
    <property type="molecule type" value="Genomic_DNA"/>
</dbReference>
<dbReference type="EMBL" id="AY693297">
    <property type="protein sequence ID" value="AAT93316.1"/>
    <property type="molecule type" value="Genomic_DNA"/>
</dbReference>
<dbReference type="PIR" id="S64313">
    <property type="entry name" value="S64313"/>
</dbReference>
<dbReference type="IntAct" id="P53213">
    <property type="interactions" value="1"/>
</dbReference>
<dbReference type="PaxDb" id="4932-YGR022C"/>
<dbReference type="EnsemblFungi" id="YGR022C_mRNA">
    <property type="protein sequence ID" value="YGR022C"/>
    <property type="gene ID" value="YGR022C"/>
</dbReference>
<dbReference type="AGR" id="SGD:S000003254"/>
<dbReference type="SGD" id="S000003254">
    <property type="gene designation" value="YGR022C"/>
</dbReference>
<dbReference type="HOGENOM" id="CLU_2186021_0_0_1"/>